<protein>
    <recommendedName>
        <fullName evidence="1">Large ribosomal subunit protein bL27</fullName>
    </recommendedName>
    <alternativeName>
        <fullName evidence="3">50S ribosomal protein L27</fullName>
    </alternativeName>
</protein>
<organism>
    <name type="scientific">Helicobacter pylori (strain G27)</name>
    <dbReference type="NCBI Taxonomy" id="563041"/>
    <lineage>
        <taxon>Bacteria</taxon>
        <taxon>Pseudomonadati</taxon>
        <taxon>Campylobacterota</taxon>
        <taxon>Epsilonproteobacteria</taxon>
        <taxon>Campylobacterales</taxon>
        <taxon>Helicobacteraceae</taxon>
        <taxon>Helicobacter</taxon>
    </lineage>
</organism>
<reference key="1">
    <citation type="journal article" date="2009" name="J. Bacteriol.">
        <title>The complete genome sequence of Helicobacter pylori strain G27.</title>
        <authorList>
            <person name="Baltrus D.A."/>
            <person name="Amieva M.R."/>
            <person name="Covacci A."/>
            <person name="Lowe T.M."/>
            <person name="Merrell D.S."/>
            <person name="Ottemann K.M."/>
            <person name="Stein M."/>
            <person name="Salama N.R."/>
            <person name="Guillemin K."/>
        </authorList>
    </citation>
    <scope>NUCLEOTIDE SEQUENCE [LARGE SCALE GENOMIC DNA]</scope>
    <source>
        <strain>G27</strain>
    </source>
</reference>
<feature type="chain" id="PRO_1000128758" description="Large ribosomal subunit protein bL27">
    <location>
        <begin position="1"/>
        <end position="88"/>
    </location>
</feature>
<feature type="region of interest" description="Disordered" evidence="2">
    <location>
        <begin position="1"/>
        <end position="21"/>
    </location>
</feature>
<proteinExistence type="inferred from homology"/>
<accession>B5ZA63</accession>
<sequence length="88" mass="9778">MAHKKGQGSTQNNRDSAGRRLGVKKFGSEFVRAGNIIVRQRGTKMHPGNNVGMGKDHTLYALIDGVVKFEHKDRNRKKVSVVSQNFGE</sequence>
<comment type="similarity">
    <text evidence="1">Belongs to the bacterial ribosomal protein bL27 family.</text>
</comment>
<name>RL27_HELPG</name>
<keyword id="KW-1185">Reference proteome</keyword>
<keyword id="KW-0687">Ribonucleoprotein</keyword>
<keyword id="KW-0689">Ribosomal protein</keyword>
<evidence type="ECO:0000255" key="1">
    <source>
        <dbReference type="HAMAP-Rule" id="MF_00539"/>
    </source>
</evidence>
<evidence type="ECO:0000256" key="2">
    <source>
        <dbReference type="SAM" id="MobiDB-lite"/>
    </source>
</evidence>
<evidence type="ECO:0000305" key="3"/>
<gene>
    <name evidence="1" type="primary">rpmA</name>
    <name type="ordered locus">HPG27_276</name>
</gene>
<dbReference type="EMBL" id="CP001173">
    <property type="protein sequence ID" value="ACI27043.1"/>
    <property type="molecule type" value="Genomic_DNA"/>
</dbReference>
<dbReference type="RefSeq" id="WP_000940618.1">
    <property type="nucleotide sequence ID" value="NC_011333.1"/>
</dbReference>
<dbReference type="SMR" id="B5ZA63"/>
<dbReference type="GeneID" id="93236667"/>
<dbReference type="KEGG" id="hpg:HPG27_276"/>
<dbReference type="HOGENOM" id="CLU_095424_4_0_7"/>
<dbReference type="Proteomes" id="UP000001735">
    <property type="component" value="Chromosome"/>
</dbReference>
<dbReference type="GO" id="GO:0022625">
    <property type="term" value="C:cytosolic large ribosomal subunit"/>
    <property type="evidence" value="ECO:0007669"/>
    <property type="project" value="TreeGrafter"/>
</dbReference>
<dbReference type="GO" id="GO:0003735">
    <property type="term" value="F:structural constituent of ribosome"/>
    <property type="evidence" value="ECO:0007669"/>
    <property type="project" value="InterPro"/>
</dbReference>
<dbReference type="GO" id="GO:0006412">
    <property type="term" value="P:translation"/>
    <property type="evidence" value="ECO:0007669"/>
    <property type="project" value="UniProtKB-UniRule"/>
</dbReference>
<dbReference type="FunFam" id="2.40.50.100:FF:000026">
    <property type="entry name" value="50S ribosomal protein L27"/>
    <property type="match status" value="1"/>
</dbReference>
<dbReference type="Gene3D" id="2.40.50.100">
    <property type="match status" value="1"/>
</dbReference>
<dbReference type="HAMAP" id="MF_00539">
    <property type="entry name" value="Ribosomal_bL27"/>
    <property type="match status" value="1"/>
</dbReference>
<dbReference type="InterPro" id="IPR001684">
    <property type="entry name" value="Ribosomal_bL27"/>
</dbReference>
<dbReference type="InterPro" id="IPR018261">
    <property type="entry name" value="Ribosomal_bL27_CS"/>
</dbReference>
<dbReference type="NCBIfam" id="TIGR00062">
    <property type="entry name" value="L27"/>
    <property type="match status" value="1"/>
</dbReference>
<dbReference type="PANTHER" id="PTHR15893:SF0">
    <property type="entry name" value="LARGE RIBOSOMAL SUBUNIT PROTEIN BL27M"/>
    <property type="match status" value="1"/>
</dbReference>
<dbReference type="PANTHER" id="PTHR15893">
    <property type="entry name" value="RIBOSOMAL PROTEIN L27"/>
    <property type="match status" value="1"/>
</dbReference>
<dbReference type="Pfam" id="PF01016">
    <property type="entry name" value="Ribosomal_L27"/>
    <property type="match status" value="1"/>
</dbReference>
<dbReference type="PRINTS" id="PR00063">
    <property type="entry name" value="RIBOSOMALL27"/>
</dbReference>
<dbReference type="SUPFAM" id="SSF110324">
    <property type="entry name" value="Ribosomal L27 protein-like"/>
    <property type="match status" value="1"/>
</dbReference>
<dbReference type="PROSITE" id="PS00831">
    <property type="entry name" value="RIBOSOMAL_L27"/>
    <property type="match status" value="1"/>
</dbReference>